<gene>
    <name type="primary">Arrb2</name>
</gene>
<reference key="1">
    <citation type="journal article" date="1992" name="J. Biol. Chem.">
        <title>Beta-arrestin2, a novel member of the arrestin/beta-arrestin gene family.</title>
        <authorList>
            <person name="Attramadal H."/>
            <person name="Arriza J.L."/>
            <person name="Aoki C."/>
            <person name="Dawson T.M."/>
            <person name="Codina J."/>
            <person name="Kwatra M.M."/>
            <person name="Snyder S.H."/>
            <person name="Caron M.G."/>
            <person name="Lefkowitz R.J."/>
        </authorList>
    </citation>
    <scope>NUCLEOTIDE SEQUENCE [MRNA]</scope>
    <source>
        <strain>Sprague-Dawley</strain>
        <tissue>Brain</tissue>
    </source>
</reference>
<reference key="2">
    <citation type="journal article" date="2004" name="Genome Res.">
        <title>The status, quality, and expansion of the NIH full-length cDNA project: the Mammalian Gene Collection (MGC).</title>
        <authorList>
            <consortium name="The MGC Project Team"/>
        </authorList>
    </citation>
    <scope>NUCLEOTIDE SEQUENCE [LARGE SCALE MRNA]</scope>
    <source>
        <tissue>Brain</tissue>
    </source>
</reference>
<reference key="3">
    <citation type="journal article" date="1994" name="J. Biol. Chem.">
        <title>Cone arrestin identified by targeting expression of a functional family.</title>
        <authorList>
            <person name="Craft C.M."/>
            <person name="Whitmore D.H."/>
            <person name="Wiechmann A.F."/>
        </authorList>
    </citation>
    <scope>NUCLEOTIDE SEQUENCE [MRNA] OF 295-410</scope>
    <source>
        <tissue>Pineal gland</tissue>
    </source>
</reference>
<reference key="4">
    <citation type="journal article" date="1998" name="Eur. J. Neurosci.">
        <title>Differential expression of alternative splice variants of beta-arrestin-1 and -2 in rat central nervous system and peripheral tissues.</title>
        <authorList>
            <person name="Komori N."/>
            <person name="Cain S.D."/>
            <person name="Roch J.-M."/>
            <person name="Miller K.E."/>
            <person name="Matsumoto H."/>
        </authorList>
    </citation>
    <scope>NUCLEOTIDE SEQUENCE [GENOMIC DNA] OF 305-386</scope>
    <source>
        <strain>Sprague-Dawley</strain>
        <tissue>Retina</tissue>
    </source>
</reference>
<reference key="5">
    <citation type="journal article" date="1998" name="J. Biol. Chem.">
        <title>beta-arrestins regulate mitogenic signaling and clathrin-mediated endocytosis of the insulin-like growth factor I receptor.</title>
        <authorList>
            <person name="Lin F.-T."/>
            <person name="Daaka Y."/>
            <person name="Lefkowitz R.J."/>
        </authorList>
    </citation>
    <scope>INTERACTION WITH IGF1R</scope>
</reference>
<reference key="6">
    <citation type="journal article" date="1999" name="Proc. Natl. Acad. Sci. U.S.A.">
        <title>The beta2-adrenergic receptor/betaarrestin complex recruits the clathrin adaptor AP-2 during endocytosis.</title>
        <authorList>
            <person name="Laporte S.A."/>
            <person name="Oakley R.H."/>
            <person name="Zhang J."/>
            <person name="Holt J.A."/>
            <person name="Ferguson S.S.G."/>
            <person name="Caron M.G."/>
            <person name="Barak L.S."/>
        </authorList>
    </citation>
    <scope>FUNCTION IN INTERNALIZATION OF ADRB2</scope>
    <scope>INTERACTION WITH CLTC AND AP2B1</scope>
    <scope>MUTAGENESIS OF 374-LEU--PHE-377</scope>
    <scope>SUBCELLULAR LOCATION</scope>
</reference>
<reference key="7">
    <citation type="journal article" date="2000" name="J. Biol. Chem.">
        <title>beta-arrestin1 interacts with the catalytic domain of the tyrosine kinase c-SRC. Role of beta-arrestin1-dependent targeting of c-SRC in receptor endocytosis.</title>
        <authorList>
            <person name="Miller W.E."/>
            <person name="Maudsley S."/>
            <person name="Ahn S."/>
            <person name="Khan K.D."/>
            <person name="Luttrell L.M."/>
            <person name="Lefkowitz R.J."/>
        </authorList>
    </citation>
    <scope>INTERACTION WITH SRC</scope>
</reference>
<reference key="8">
    <citation type="journal article" date="2000" name="J. Biol. Chem.">
        <title>Regulation and intracellular trafficking pathways of the endothelin receptors.</title>
        <authorList>
            <person name="Bremnes T."/>
            <person name="Paasche J.D."/>
            <person name="Mehlum A."/>
            <person name="Sandberg C."/>
            <person name="Bremnes B."/>
            <person name="Attramadal H."/>
        </authorList>
    </citation>
    <scope>FUNCTION IN INTERNALIZATION OF EDNRA AND EDNRB</scope>
    <scope>MUTAGENESIS OF VAL-54</scope>
</reference>
<reference key="9">
    <citation type="journal article" date="2000" name="J. Biol. Chem.">
        <title>The interaction of beta-arrestin with the AP-2 adaptor is required for the clustering of beta 2-adrenergic receptor into clathrin-coated pits.</title>
        <authorList>
            <person name="Laporte S.A."/>
            <person name="Oakley R.H."/>
            <person name="Holt J.A."/>
            <person name="Barak L.S."/>
            <person name="Caron M.G."/>
        </authorList>
    </citation>
    <scope>SUBCELLULAR LOCATION</scope>
    <scope>INTERACTION WITH AP2B1 AND CLTC</scope>
    <scope>MUTAGENESIS OF ARG-396 AND LYS-398</scope>
</reference>
<reference key="10">
    <citation type="journal article" date="2000" name="J. Cell Sci.">
        <title>Selective recruitment of arrestin-3 to clathrin coated pits upon stimulation of G protein-coupled receptors.</title>
        <authorList>
            <person name="Santini F."/>
            <person name="Penn R.B."/>
            <person name="Gagnon A.W."/>
            <person name="Benovic J.L."/>
            <person name="Keen J.H."/>
        </authorList>
    </citation>
    <scope>SUBCELLULAR LOCATION</scope>
</reference>
<reference key="11">
    <citation type="journal article" date="2000" name="Science">
        <title>Beta-arrestin 2: a receptor-regulated MAPK scaffold for the activation of JNK3.</title>
        <authorList>
            <person name="McDonald P.H."/>
            <person name="Chow C.W."/>
            <person name="Miller W.E."/>
            <person name="Laporte S.A."/>
            <person name="Field M.E."/>
            <person name="Lin F.-T."/>
            <person name="Davis R.J."/>
            <person name="Lefkowitz R.J."/>
        </authorList>
    </citation>
    <scope>FUNCTION IN MAPK SIGNALING</scope>
    <scope>INTERACTION WITH MAPK10; MAP2K4 AND MAP3K5</scope>
</reference>
<reference key="12">
    <citation type="journal article" date="2001" name="J. Biol. Chem.">
        <title>Characterization of sequence determinants within the carboxyl-terminal domain of chemokine receptor CCR5 that regulate signaling and receptor internalization.</title>
        <authorList>
            <person name="Kraft K."/>
            <person name="Olbrich H."/>
            <person name="Majoul I."/>
            <person name="Mack M."/>
            <person name="Proudfoot A."/>
            <person name="Oppermann M."/>
        </authorList>
    </citation>
    <scope>INTERACTION WITH CCR5</scope>
</reference>
<reference key="13">
    <citation type="journal article" date="2001" name="Proc. Natl. Acad. Sci. U.S.A.">
        <title>Activation and targeting of extracellular signal-regulated kinases by beta-arrestin scaffolds.</title>
        <authorList>
            <person name="Luttrell L.M."/>
            <person name="Roudabush F.L."/>
            <person name="Choy E.W."/>
            <person name="Miller W.E."/>
            <person name="Field M.E."/>
            <person name="Pierce K.L."/>
            <person name="Lefkowitz R.J."/>
        </authorList>
    </citation>
    <scope>FUNCTION IN MAPK SIGNALING</scope>
    <scope>INTERACTION WITH RAF1; MAP2K1 AND MAPK1</scope>
</reference>
<reference key="14">
    <citation type="journal article" date="2001" name="Science">
        <title>Regulation of receptor fate by ubiquitination of activated beta 2-adrenergic receptor and beta-arrestin.</title>
        <authorList>
            <person name="Shenoy S.K."/>
            <person name="McDonald P.H."/>
            <person name="Kohout T.A."/>
            <person name="Lefkowitz R.J."/>
        </authorList>
    </citation>
    <scope>UBIQUITINATION</scope>
    <scope>INTERACTION WITH MDM2</scope>
</reference>
<reference key="15">
    <citation type="journal article" date="2002" name="Biochemistry">
        <title>Phosphorylation of beta-arrestin2 regulates its function in internalization of beta(2)-adrenergic receptors.</title>
        <authorList>
            <person name="Lin F.-T."/>
            <person name="Chen W."/>
            <person name="Shenoy S."/>
            <person name="Cong M."/>
            <person name="Exum S.T."/>
            <person name="Lefkowitz R.J."/>
        </authorList>
    </citation>
    <scope>PHOSPHORYLATION AT SER-361 AND THR-383</scope>
    <scope>INTERACTION WITH CLTC</scope>
    <scope>MUTAGENESIS OF SER-361 AND THR-383</scope>
</reference>
<reference key="16">
    <citation type="journal article" date="2002" name="J. Biol. Chem.">
        <title>beta-Arrestin/AP-2 interaction in G protein-coupled receptor internalization: identification of a beta-arrestin binding site in beta 2-adaptin.</title>
        <authorList>
            <person name="Laporte S.A."/>
            <person name="Miller W.E."/>
            <person name="Kim K.-M."/>
            <person name="Caron M.G."/>
        </authorList>
    </citation>
    <scope>INTERACTION WITH AP2B1</scope>
</reference>
<reference key="17">
    <citation type="journal article" date="2002" name="J. Biol. Chem.">
        <title>beta-Arrestin scaffolding of the ERK cascade enhances cytosolic ERK activity but inhibits ERK-mediated transcription following angiotensin AT1a receptor stimulation.</title>
        <authorList>
            <person name="Tohgo A."/>
            <person name="Pierce K.L."/>
            <person name="Choy E.W."/>
            <person name="Lefkowitz R.J."/>
            <person name="Luttrell L.M."/>
        </authorList>
    </citation>
    <scope>FUNCTION IN ERK SIGNALING</scope>
</reference>
<reference key="18">
    <citation type="journal article" date="2003" name="J. Biol. Chem.">
        <title>Phosphorylation of key serine residues is required for internalization of the complement 5a (C5a) anaphylatoxin receptor via a beta-arrestin, dynamin, and clathrin-dependent pathway.</title>
        <authorList>
            <person name="Braun L."/>
            <person name="Christophe T."/>
            <person name="Boulay F."/>
        </authorList>
    </citation>
    <scope>FUNCTION IN INTERNALIZATION OF C5AR1</scope>
    <scope>SUBCELLULAR LOCATION</scope>
    <scope>INTERACTION WITH C5AR1</scope>
</reference>
<reference key="19">
    <citation type="journal article" date="2003" name="J. Biol. Chem.">
        <title>The adaptor protein beta-arrestin2 enhances endocytosis of the low density lipoprotein receptor.</title>
        <authorList>
            <person name="Wu J.-H."/>
            <person name="Peppel K."/>
            <person name="Nelson C.D."/>
            <person name="Lin F.-T."/>
            <person name="Kohout T.A."/>
            <person name="Miller W.E."/>
            <person name="Exum S.T."/>
            <person name="Freedman N.J."/>
        </authorList>
    </citation>
    <scope>INTERACTION WITH LDLR</scope>
</reference>
<reference key="20">
    <citation type="journal article" date="2003" name="J. Biol. Chem.">
        <title>The unique amino-terminal region of the PDE4D5 cAMP phosphodiesterase isoform confers preferential interaction with beta-arrestins.</title>
        <authorList>
            <person name="Bolger G.B."/>
            <person name="McCahill A."/>
            <person name="Huston E."/>
            <person name="Cheung Y.F."/>
            <person name="McSorley T."/>
            <person name="Baillie G.S."/>
            <person name="Houslay M.D."/>
        </authorList>
    </citation>
    <scope>INTERACTION WITH PDE4D</scope>
</reference>
<reference key="21">
    <citation type="journal article" date="2004" name="Proc. Natl. Acad. Sci. U.S.A.">
        <title>beta-Arrestin inhibits NF-kappaB activity by means of its interaction with the NF-kappaB inhibitor IkappaBalpha.</title>
        <authorList>
            <person name="Witherow D.S."/>
            <person name="Garrison T.R."/>
            <person name="Miller W.E."/>
            <person name="Lefkowitz R.J."/>
        </authorList>
    </citation>
    <scope>INTERACTION WITH CHUK; IKBKB AND MAP3K14</scope>
</reference>
<reference key="22">
    <citation type="journal article" date="2004" name="Science">
        <title>Activity-dependent internalization of smoothened mediated by beta-arrestin 2 and GRK2.</title>
        <authorList>
            <person name="Chen W."/>
            <person name="Ren X.R."/>
            <person name="Nelson C.D."/>
            <person name="Barak L.S."/>
            <person name="Chen J.K."/>
            <person name="Beachy P.A."/>
            <person name="de Sauvage F."/>
            <person name="Lefkowitz R.J."/>
        </authorList>
    </citation>
    <scope>INTERACTION WITH SMO</scope>
</reference>
<reference key="23">
    <citation type="journal article" date="2005" name="Cell">
        <title>An Akt/beta-arrestin 2/PP2A signaling complex mediates dopaminergic neurotransmission and behavior.</title>
        <authorList>
            <person name="Beaulieu J.-M."/>
            <person name="Sotnikova T.D."/>
            <person name="Marion S."/>
            <person name="Lefkowitz R.J."/>
            <person name="Gainetdinov R.R."/>
            <person name="Caron M.G."/>
        </authorList>
    </citation>
    <scope>INTERACTION WITH AKT1; GSK3A AND GSK3B</scope>
</reference>
<reference key="24">
    <citation type="journal article" date="2005" name="J. Biol. Chem.">
        <title>Receptor-specific ubiquitination of beta-arrestin directs assembly and targeting of seven-transmembrane receptor signalosomes.</title>
        <authorList>
            <person name="Shenoy S.K."/>
            <person name="Lefkowitz R.J."/>
        </authorList>
    </citation>
    <scope>UBIQUITINATION</scope>
    <scope>MUTAGENESIS OF 11-LYS-LYS-12</scope>
</reference>
<reference key="25">
    <citation type="journal article" date="2005" name="J. Biol. Chem.">
        <title>{beta}-Arrestin is crucial for ubiquitination and down-regulation of the insulin-like growth factor-1 receptor by acting as adaptor for the MDM2 E3 ligase.</title>
        <authorList>
            <person name="Girnita L."/>
            <person name="Shenoy S.K."/>
            <person name="Sehat B."/>
            <person name="Vasilcanu R."/>
            <person name="Girnita A."/>
            <person name="Lefkowitz R.J."/>
            <person name="Larsson O."/>
        </authorList>
    </citation>
    <scope>FUNCTION IN UBIQUITINATION OF IGF1R</scope>
</reference>
<reference key="26">
    <citation type="journal article" date="2005" name="Mol. Pharmacol.">
        <title>Identification and characterization of PDE4A11, a novel, widely expressed long isoform encoded by the human PDE4A cAMP phosphodiesterase gene.</title>
        <authorList>
            <person name="Wallace D.A."/>
            <person name="Johnston L.A."/>
            <person name="Huston E."/>
            <person name="Macmaster D."/>
            <person name="Houslay T.M."/>
            <person name="Cheung Y.-F."/>
            <person name="Campbell L."/>
            <person name="Millen J.E."/>
            <person name="Smith R.A."/>
            <person name="Gall I."/>
            <person name="Knowles R.G."/>
            <person name="Sullivan M."/>
            <person name="Houslay M.D."/>
        </authorList>
    </citation>
    <scope>INTERACTION WITH PDE4A</scope>
</reference>
<reference key="27">
    <citation type="journal article" date="2007" name="J. Biol. Chem.">
        <title>Ubiquitination of beta-arrestin links seven-transmembrane receptor endocytosis and ERK activation.</title>
        <authorList>
            <person name="Shenoy S.K."/>
            <person name="Barak L.S."/>
            <person name="Xiao K."/>
            <person name="Ahn S."/>
            <person name="Berthouze M."/>
            <person name="Shukla A.K."/>
            <person name="Luttrell L.M."/>
            <person name="Lefkowitz R.J."/>
        </authorList>
    </citation>
    <scope>UBIQUITINATION</scope>
</reference>
<reference key="28">
    <citation type="journal article" date="2008" name="J. Biol. Chem.">
        <title>Role of beta-arrestin-mediated desensitization and signaling in the control of angiotensin AT1a receptor-stimulated transcription.</title>
        <authorList>
            <person name="Lee M.-H."/>
            <person name="El-Shewy H.M."/>
            <person name="Luttrell D.K."/>
            <person name="Luttrell L.M."/>
        </authorList>
    </citation>
    <scope>FUNCTION IN DESENSITIZATION OF AGTR1</scope>
    <scope>FUNCTION IN AGTR1-MEDIATED ERK SIGNALING</scope>
</reference>
<reference key="29">
    <citation type="journal article" date="2008" name="J. Biol. Chem.">
        <title>The beta-arrestin-2 scaffold protein promotes c-Jun N-terminal kinase-3 activation by binding to its nonconserved N terminus.</title>
        <authorList>
            <person name="Guo C."/>
            <person name="Whitmarsh A.J."/>
        </authorList>
    </citation>
    <scope>FUNCTION IN MAPK SIGNALING</scope>
    <scope>INTERACTION WITH MAPK10 AND MAP3K5</scope>
    <scope>MUTAGENESIS OF SER-198</scope>
</reference>
<reference key="30">
    <citation type="journal article" date="2008" name="J. Mol. Signal.">
        <title>Differential role of beta-arrestin ubiquitination in agonist-promoted down-regulation of M1 vs M2 muscarinic acetylcholine receptors.</title>
        <authorList>
            <person name="Mosser V.A."/>
            <person name="Jones K.T."/>
            <person name="Hoffman K.M."/>
            <person name="McCarty N.A."/>
            <person name="Jackson D.A."/>
        </authorList>
    </citation>
    <scope>FUNCTION IN INTERNALIZATION OF CHRM1 AND CHRM2</scope>
    <scope>MUTAGENESIS OF LYS-18; LYS-107; LYS-108; LYS-207 AND LYS-296</scope>
</reference>
<reference key="31">
    <citation type="journal article" date="2012" name="Nature">
        <title>APJ acts as a dual receptor in cardiac hypertrophy.</title>
        <authorList>
            <person name="Scimia M.C."/>
            <person name="Hurtado C."/>
            <person name="Ray S."/>
            <person name="Metzler S."/>
            <person name="Wei K."/>
            <person name="Wang J."/>
            <person name="Woods C.E."/>
            <person name="Purcell N.H."/>
            <person name="Catalucci D."/>
            <person name="Akasaka T."/>
            <person name="Bueno O.F."/>
            <person name="Vlasuk G.P."/>
            <person name="Kaliman P."/>
            <person name="Bodmer R."/>
            <person name="Smith L.H."/>
            <person name="Ashley E."/>
            <person name="Mercola M."/>
            <person name="Brown J.H."/>
            <person name="Ruiz-Lozano P."/>
        </authorList>
    </citation>
    <scope>FUNCTION</scope>
</reference>
<reference key="32">
    <citation type="journal article" date="2013" name="J. Cell Sci.">
        <title>Alpha-arrestin 1 (ARRDC1) and beta-arrestins cooperate to mediate Notch degradation in mammals.</title>
        <authorList>
            <person name="Puca L."/>
            <person name="Chastagner P."/>
            <person name="Meas-Yedid V."/>
            <person name="Israel A."/>
            <person name="Brou C."/>
        </authorList>
    </citation>
    <scope>INTERACTION WITH ARRDC1</scope>
</reference>
<comment type="function">
    <text evidence="1 2 4 5 7 8 9 11 13 14 15 16 17">Functions in regulating agonist-mediated G-protein coupled receptor (GPCR) signaling by mediating both receptor desensitization and resensitization processes. During homologous desensitization, beta-arrestins bind to the GPRK-phosphorylated receptor and sterically preclude its coupling to the cognate G-protein; the binding appears to require additional receptor determinants exposed only in the active receptor conformation. The beta-arrestins target many receptors for internalization by acting as endocytic adapters (CLASPs, clathrin-associated sorting proteins) and recruiting the GPRCs to the adapter protein 2 complex 2 (AP-2) in clathrin-coated pits (CCPs). However, the extent of beta-arrestin involvement appears to vary significantly depending on the receptor, agonist and cell type. Internalized arrestin-receptor complexes traffic to intracellular endosomes, where they remain uncoupled from G-proteins. Two different modes of arrestin-mediated internalization occur. Class A receptors, like ADRB2, OPRM1, ENDRA, D1AR and ADRA1B dissociate from beta-arrestin at or near the plasma membrane and undergo rapid recycling. Class B receptors, like AVPR2, AGTR1, NTSR1, TRHR and TACR1 internalize as a complex with arrestin and traffic with it to endosomal vesicles, presumably as desensitized receptors, for extended periods of time. Receptor resensitization then requires that receptor-bound arrestin is removed so that the receptor can be dephosphorylated and returned to the plasma membrane. Mediates endocytosis of CCR7 following ligation of CCL19 but not CCL21. Involved in internalization of P2RY1, P2RY4, P2RY6 and P2RY11 and ATP-stimulated internalization of P2RY2. Involved in phosphorylation-dependent internalization of OPRD1 and subsequent recycling or degradation. Involved in ubiquitination of IGF1R. Beta-arrestins function as multivalent adapter proteins that can switch the GPCR from a G-protein signaling mode that transmits short-lived signals from the plasma membrane via small molecule second messengers and ion channels to a beta-arrestin signaling mode that transmits a distinct set of signals that are initiated as the receptor internalizes and transits the intracellular compartment. Acts as a signaling scaffold for MAPK pathways such as MAPK1/3 (ERK1/2) and MAPK10 (JNK3). ERK1/2 and JNK3 activated by the beta-arrestin scaffold are largely excluded from the nucleus and confined to cytoplasmic locations such as endocytic vesicles, also called beta-arrestin signalosomes. Acts as a signaling scaffold for the AKT1 pathway. GPCRs for which the beta-arrestin-mediated signaling relies on both ARRB1 and ARRB2 (codependent regulation) include ADRB2, F2RL1 and PTH1R. For some GPCRs the beta-arrestin-mediated signaling relies on either ARRB1 or ARRB2 and is inhibited by the other respective beta-arrestin form (reciprocal regulation). Increases ERK1/2 signaling in AGTR1- and AVPR2-mediated activation (reciprocal regulation). Involved in CCR7-mediated ERK1/2 signaling involving ligand CCL19. Is involved in type-1A angiotensin II receptor/AGTR1-mediated ERK activity. Is involved in type-1A angiotensin II receptor/AGTR1-mediated MAPK10 activity. Is involved in dopamine-stimulated AKT1 activity in the striatum by disrupting the association of AKT1 with its negative regulator PP2A. Involved in AGTR1-mediated chemotaxis. Appears to function as signaling scaffold involved in regulation of MIP-1-beta-stimulated CCR5-dependent chemotaxis. Involved in attenuation of NF-kappa-B-dependent transcription in response to GPCR or cytokine stimulation by interacting with and stabilizing CHUK. Suppresses UV-induced NF-kappa-B-dependent activation by interacting with CHUK. The function is promoted by stimulation of ADRB2 and dephosphorylation of ARRB2. Involved in IL8-mediated granule release in neutrophils (By similarity). Involved in p53/TP53-mediated apoptosis by regulating MDM2 and reducing the MDM2-mediated degradation of p53/TP53. May serve as nuclear messenger for GPCRs. Upon stimulation of OR1D2, may be involved in regulation of gene expression during the early processes of fertilization. Also involved in regulation of receptors other than GPCRs. Involved in endocytosis of TGFBR2 and TGFBR3 and down-regulates TGF-beta signaling such as NF-kappa-B activation. Involved in endocytosis of low-density lipoprotein receptor/LDLR. Involved in endocytosis of smoothened homolog/Smo, which also requires GRK2. Involved in endocytosis of SLC9A5. Involved in endocytosis of ENG and subsequent TGF-beta-mediated ERK activation and migration of epithelial cells. Involved in Toll-like receptor and IL-1 receptor signaling through the interaction with TRAF6 which prevents TRAF6 autoubiquitination and oligomerization required for activation of NF-kappa-B and JUN. Involved in insulin resistance by acting as insulin-induced signaling scaffold for SRC, AKT1 and INSR. Involved in regulation of inhibitory signaling of natural killer cells by recruiting PTPN6 and PTPN11 to KIR2DL1. Involved in the internalization of the atypical chemokine receptor ACKR3 (By similarity). Acts as an adapter protein coupling FFAR4 receptor to specific downstream signaling pathways, as well as mediating receptor endocytosis. During the activation step of NLRP3 inflammasome, directly associates with NLRP3 leading to inhibition of pro-inflammatory cytokine release and inhibition of inflammation.</text>
</comment>
<comment type="subunit">
    <text evidence="1 2 18 19">Homooligomer; the self-association is mediated by InsP6-binding (Probable). Heterooligomer with ARRB1; the association is mediated by InsP6-binding. Interacts with ADRB2 and CHRM2. Interacts with PDE4A. Interacts with PDE4D. Interacts with MAPK10, MAPK1 and MAPK3. Interacts with DRD2. Interacts with FSHR. Interacts with CLTC. Interacts with HTR2C. Interacts with CCR5. Interacts with CXCR4. Interacts with SRC. Interacts with DUSP16; the interaction is interrupted by stimulation of AGTR1 and activation of MAPK10. Interacts with CHUK; the interaction is enhanced stimulation of ADRB2. Interacts with RELA. Interacts with MDM2; the interaction is enhanced by activation of GPCRs. Interacts with SLC9A5. Interacts with TRAF6. Interacts with IGF1R. Interacts with ENG. Interacts with KIR2DL1, KIR2DL3 and KIR2DL4. Interacts with LDLR. Interacts with AP2B1. Interacts with C5AR1. Interacts with RAF1. Interacts with MAP2K1. Interacts with MAPK1. Interacts with MAPK10; the interaction enhances MAPK10 activation by MAP3K5. Interacts with MAP2K4; the interaction is enhanced by presence of MAP3K5 and MAPK10. Interacts with MAP3K5. Interacts with AKT1. Interacts with IKBKB and MAP3K14. Interacts with SMO (activated). Interacts with GSK3A and GSK3B. Associates with protein phosphatase 2A (PP2A). Interacts with CXCR4; the interaction is dependent on C-terminal phosphorylation of CXCR4 and allows activation of MAPK1 and MAPK3. Interacts with GPR143. Interacts with HCK and CXCR1 (phosphorylated) (By similarity). Interacts with ACKR3 and ACKR4 (By similarity). Interacts with ARRDC1; the interaction is direct (PubMed:23886940). Interacts with GPR61, GPR62 and GPR135 (By similarity). Interacts (via NACHT and LRR domains) with NLRP3; this interaction is direct and inducible by omega-3 polyunsaturated fatty acids (PUFAs) (By similarity). Interacts with FFAR4 (via C-terminus); this interaction is stimulated by long-chain fatty acids (LCFAs) (By similarity). Interacts with GPR35 (By similarity). Interacts with GPR84 (By similarity). Interacts with TIGIT; this interaction inhibits the NF-kappa-B pathway (By similarity). Interacts with TGFBR3 (By similarity).</text>
</comment>
<comment type="interaction">
    <interactant intactId="EBI-1636616">
        <id>P29067</id>
    </interactant>
    <interactant intactId="EBI-1636616">
        <id>P29067</id>
        <label>Arrb2</label>
    </interactant>
    <organismsDiffer>false</organismsDiffer>
    <experiments>3</experiments>
</comment>
<comment type="interaction">
    <interactant intactId="EBI-1636616">
        <id>P29067</id>
    </interactant>
    <interactant intactId="EBI-296087">
        <id>P31749</id>
        <label>AKT1</label>
    </interactant>
    <organismsDiffer>true</organismsDiffer>
    <experiments>2</experiments>
</comment>
<comment type="interaction">
    <interactant intactId="EBI-1636616">
        <id>P29067</id>
    </interactant>
    <interactant intactId="EBI-444403">
        <id>P53667</id>
        <label>LIMK1</label>
    </interactant>
    <organismsDiffer>true</organismsDiffer>
    <experiments>2</experiments>
</comment>
<comment type="interaction">
    <interactant intactId="EBI-1636616">
        <id>P29067</id>
    </interactant>
    <interactant intactId="EBI-389668">
        <id>Q00987</id>
        <label>MDM2</label>
    </interactant>
    <organismsDiffer>true</organismsDiffer>
    <experiments>4</experiments>
</comment>
<comment type="subcellular location">
    <subcellularLocation>
        <location>Cytoplasm</location>
    </subcellularLocation>
    <subcellularLocation>
        <location evidence="1">Nucleus</location>
    </subcellularLocation>
    <subcellularLocation>
        <location>Cell membrane</location>
    </subcellularLocation>
    <subcellularLocation>
        <location>Membrane</location>
        <location>Clathrin-coated pit</location>
    </subcellularLocation>
    <subcellularLocation>
        <location evidence="1">Cytoplasmic vesicle</location>
    </subcellularLocation>
    <text>Translocates to the plasma membrane and colocalizes with antagonist-stimulated GPCRs.</text>
</comment>
<comment type="tissue specificity">
    <text>Predominantly localized in neuronal tissues and in the spleen.</text>
</comment>
<comment type="PTM">
    <text evidence="1">Phosphorylated at Thr-383 in the cytoplasm; probably dephosphorylated at the plasma membrane. The phosphorylation does not regulate internalization and recycling of ADRB2, interaction with clathrin or AP2B1 (By similarity).</text>
</comment>
<comment type="PTM">
    <text evidence="2">The ubiquitination status appears to regulate the formation and trafficking of beta-arrestin-GPCR complexes and signaling. Ubiquitination appears to occur GPCR-specific. Ubiquitinated by MDM2; the ubiquitination is required for rapid internalization of ADRB2. Deubiquitinated by USP33; the deubiquitination leads to a dissociation of the beta-arrestin-GPCR complex. Stimulation of a class A GPCR, such as ADRB2, induces transient ubiquitination and subsequently promotes association with USP33. Stimulation of a class B GPCR promotes a sustained ubiquitination. Deubiquitinated by USP20; allowing USP20 to deubiquitinate TRAF6 leading to inhibition of NF-kappa-B signaling (By similarity).</text>
</comment>
<comment type="PTM">
    <text evidence="1">Hydroxylation by PHD2 modulates the rate of internalization by slowing down recruitment to the plasma membrane and inhibiting subsequent co-internalization with class A receptors.</text>
</comment>
<comment type="similarity">
    <text evidence="19">Belongs to the arrestin family.</text>
</comment>
<organism>
    <name type="scientific">Rattus norvegicus</name>
    <name type="common">Rat</name>
    <dbReference type="NCBI Taxonomy" id="10116"/>
    <lineage>
        <taxon>Eukaryota</taxon>
        <taxon>Metazoa</taxon>
        <taxon>Chordata</taxon>
        <taxon>Craniata</taxon>
        <taxon>Vertebrata</taxon>
        <taxon>Euteleostomi</taxon>
        <taxon>Mammalia</taxon>
        <taxon>Eutheria</taxon>
        <taxon>Euarchontoglires</taxon>
        <taxon>Glires</taxon>
        <taxon>Rodentia</taxon>
        <taxon>Myomorpha</taxon>
        <taxon>Muroidea</taxon>
        <taxon>Muridae</taxon>
        <taxon>Murinae</taxon>
        <taxon>Rattus</taxon>
    </lineage>
</organism>
<name>ARRB2_RAT</name>
<feature type="chain" id="PRO_0000205201" description="Beta-arrestin-2">
    <location>
        <begin position="1"/>
        <end position="410"/>
    </location>
</feature>
<feature type="region of interest" description="Interaction with TRAF6" evidence="1">
    <location>
        <begin position="241"/>
        <end position="410"/>
    </location>
</feature>
<feature type="region of interest" description="Interaction with AP2B1">
    <location>
        <begin position="378"/>
        <end position="410"/>
    </location>
</feature>
<feature type="short sequence motif" description="[DE]-X(1,2)-F-X-X-[FL]-X-X-X-R motif" evidence="1">
    <location>
        <begin position="386"/>
        <end position="396"/>
    </location>
</feature>
<feature type="modified residue" description="Phosphotyrosine" evidence="3">
    <location>
        <position position="48"/>
    </location>
</feature>
<feature type="modified residue" description="Hydroxyproline; by PHD2" evidence="1">
    <location>
        <position position="176"/>
    </location>
</feature>
<feature type="modified residue" description="Hydroxyproline; by PHD2" evidence="1">
    <location>
        <position position="181"/>
    </location>
</feature>
<feature type="modified residue" description="Phosphoserine" evidence="10">
    <location>
        <position position="361"/>
    </location>
</feature>
<feature type="modified residue" description="Phosphothreonine; by CaMK2" evidence="20">
    <location>
        <position position="383"/>
    </location>
</feature>
<feature type="mutagenesis site" description="Transient ubiquitination; no stable endocytic complexes with AGTR1; impaired in scaffolding-activated ERK1/2." evidence="12">
    <original>KK</original>
    <variation>RR</variation>
    <location>
        <begin position="11"/>
        <end position="12"/>
    </location>
</feature>
<feature type="mutagenesis site" description="Promotes agonist-stimulated down-regulation of CHRM2 and CHRM1; no effect on internalization of CHRM2; when associated with R-107, R-108, R-207 and R-296." evidence="16">
    <original>K</original>
    <variation>R</variation>
    <location>
        <position position="18"/>
    </location>
</feature>
<feature type="mutagenesis site" description="Inhibits internalization of EDNRA and EDNRB." evidence="5">
    <original>V</original>
    <variation>A</variation>
    <location>
        <position position="54"/>
    </location>
</feature>
<feature type="mutagenesis site" description="Promotes agonist-stimulated down-regulation of CHRM2 and CHRM1; no effect on internalization of CHRM2; when associated with R-18, R-108, R-207 and R-296." evidence="16">
    <original>K</original>
    <variation>R</variation>
    <location>
        <position position="107"/>
    </location>
</feature>
<feature type="mutagenesis site" description="Promotes agonist-stimulated down-regulation of CHRM2 and CHRM1; no effect on internalization of CHRM2; when associated with R-18, R-107, R-207 and R-296." evidence="16">
    <original>K</original>
    <variation>R</variation>
    <location>
        <position position="108"/>
    </location>
</feature>
<feature type="mutagenesis site" description="Greatly reduces interaction with MAPK10." evidence="15">
    <original>S</original>
    <variation>P</variation>
    <location>
        <position position="198"/>
    </location>
</feature>
<feature type="mutagenesis site" description="Promotes agonist-stimulated down-regulation of CHRM2 and CHRM1; no effect on internalization of CHRM2; when associated with R-18, R-107, R-108 and R-296." evidence="16">
    <original>K</original>
    <variation>R</variation>
    <location>
        <position position="207"/>
    </location>
</feature>
<feature type="mutagenesis site" description="Promotes agonist-stimulated down-regulation of CHRM2 and CHRM1; no effect on internalization of CHRM2; when associated with R-18, R-107, R-108 and R-207." evidence="16">
    <original>K</original>
    <variation>R</variation>
    <location>
        <position position="296"/>
    </location>
</feature>
<feature type="mutagenesis site" description="Almost abolishes phosphorylation; inhibits internalization of ADRB2; when associated with D-383." evidence="10">
    <original>S</original>
    <variation>D</variation>
    <location>
        <position position="361"/>
    </location>
</feature>
<feature type="mutagenesis site" description="Reduces interaction with CLTC." evidence="10">
    <original>S</original>
    <variation>D</variation>
    <location>
        <position position="361"/>
    </location>
</feature>
<feature type="mutagenesis site" description="Abolishes interaction with CLTC; reduces interaction with AP2B1." evidence="4">
    <original>LIEF</original>
    <variation>AAEA</variation>
    <location>
        <begin position="374"/>
        <end position="377"/>
    </location>
</feature>
<feature type="mutagenesis site" description="Almost abolishes phosphorylation; inhibits internalization of ADRB2; when associated with D-361." evidence="10">
    <original>T</original>
    <variation>D</variation>
    <location>
        <position position="383"/>
    </location>
</feature>
<feature type="mutagenesis site" description="Reduces interaction with CLTC." evidence="10">
    <original>T</original>
    <variation>D</variation>
    <location>
        <position position="383"/>
    </location>
</feature>
<feature type="mutagenesis site" description="Abolishes interaction with AP2B1; no effect on interaction with clathrin.">
    <original>R</original>
    <variation>A</variation>
    <location>
        <position position="394"/>
    </location>
</feature>
<feature type="mutagenesis site" description="Abolishes interaction with AP2B1." evidence="6">
    <original>R</original>
    <variation>A</variation>
    <location>
        <position position="396"/>
    </location>
</feature>
<feature type="mutagenesis site" description="No effect on interaction with AP2B1." evidence="6">
    <original>K</original>
    <variation>A</variation>
    <location>
        <position position="398"/>
    </location>
</feature>
<feature type="strand" evidence="21">
    <location>
        <begin position="10"/>
        <end position="13"/>
    </location>
</feature>
<feature type="strand" evidence="21">
    <location>
        <begin position="17"/>
        <end position="24"/>
    </location>
</feature>
<feature type="strand" evidence="21">
    <location>
        <begin position="26"/>
        <end position="30"/>
    </location>
</feature>
<feature type="strand" evidence="21">
    <location>
        <begin position="32"/>
        <end position="34"/>
    </location>
</feature>
<feature type="strand" evidence="21">
    <location>
        <begin position="41"/>
        <end position="44"/>
    </location>
</feature>
<feature type="turn" evidence="21">
    <location>
        <begin position="46"/>
        <end position="48"/>
    </location>
</feature>
<feature type="strand" evidence="21">
    <location>
        <begin position="55"/>
        <end position="63"/>
    </location>
</feature>
<feature type="turn" evidence="21">
    <location>
        <begin position="67"/>
        <end position="71"/>
    </location>
</feature>
<feature type="strand" evidence="21">
    <location>
        <begin position="72"/>
        <end position="74"/>
    </location>
</feature>
<feature type="strand" evidence="21">
    <location>
        <begin position="80"/>
        <end position="85"/>
    </location>
</feature>
<feature type="helix" evidence="21">
    <location>
        <begin position="100"/>
        <end position="108"/>
    </location>
</feature>
<feature type="strand" evidence="21">
    <location>
        <begin position="113"/>
        <end position="115"/>
    </location>
</feature>
<feature type="strand" evidence="22">
    <location>
        <begin position="129"/>
        <end position="131"/>
    </location>
</feature>
<feature type="strand" evidence="21">
    <location>
        <begin position="142"/>
        <end position="150"/>
    </location>
</feature>
<feature type="strand" evidence="21">
    <location>
        <begin position="161"/>
        <end position="163"/>
    </location>
</feature>
<feature type="strand" evidence="21">
    <location>
        <begin position="168"/>
        <end position="173"/>
    </location>
</feature>
<feature type="strand" evidence="21">
    <location>
        <begin position="185"/>
        <end position="187"/>
    </location>
</feature>
<feature type="strand" evidence="21">
    <location>
        <begin position="200"/>
        <end position="204"/>
    </location>
</feature>
<feature type="strand" evidence="21">
    <location>
        <begin position="208"/>
        <end position="210"/>
    </location>
</feature>
<feature type="strand" evidence="21">
    <location>
        <begin position="216"/>
        <end position="223"/>
    </location>
</feature>
<feature type="strand" evidence="21">
    <location>
        <begin position="226"/>
        <end position="228"/>
    </location>
</feature>
<feature type="strand" evidence="21">
    <location>
        <begin position="230"/>
        <end position="240"/>
    </location>
</feature>
<feature type="strand" evidence="21">
    <location>
        <begin position="243"/>
        <end position="251"/>
    </location>
</feature>
<feature type="strand" evidence="21">
    <location>
        <begin position="253"/>
        <end position="260"/>
    </location>
</feature>
<feature type="strand" evidence="21">
    <location>
        <begin position="266"/>
        <end position="269"/>
    </location>
</feature>
<feature type="strand" evidence="21">
    <location>
        <begin position="272"/>
        <end position="276"/>
    </location>
</feature>
<feature type="turn" evidence="22">
    <location>
        <begin position="280"/>
        <end position="282"/>
    </location>
</feature>
<feature type="strand" evidence="21">
    <location>
        <begin position="283"/>
        <end position="285"/>
    </location>
</feature>
<feature type="strand" evidence="22">
    <location>
        <begin position="289"/>
        <end position="293"/>
    </location>
</feature>
<feature type="strand" evidence="22">
    <location>
        <begin position="310"/>
        <end position="312"/>
    </location>
</feature>
<feature type="strand" evidence="22">
    <location>
        <begin position="314"/>
        <end position="317"/>
    </location>
</feature>
<feature type="strand" evidence="21">
    <location>
        <begin position="325"/>
        <end position="331"/>
    </location>
</feature>
<feature type="turn" evidence="21">
    <location>
        <begin position="332"/>
        <end position="334"/>
    </location>
</feature>
<feature type="strand" evidence="21">
    <location>
        <begin position="335"/>
        <end position="339"/>
    </location>
</feature>
<feature type="strand" evidence="21">
    <location>
        <begin position="343"/>
        <end position="345"/>
    </location>
</feature>
<feature type="strand" evidence="22">
    <location>
        <begin position="387"/>
        <end position="391"/>
    </location>
</feature>
<protein>
    <recommendedName>
        <fullName>Beta-arrestin-2</fullName>
    </recommendedName>
    <alternativeName>
        <fullName>Arrestin beta-2</fullName>
    </alternativeName>
</protein>
<proteinExistence type="evidence at protein level"/>
<keyword id="KW-0002">3D-structure</keyword>
<keyword id="KW-1003">Cell membrane</keyword>
<keyword id="KW-0168">Coated pit</keyword>
<keyword id="KW-0963">Cytoplasm</keyword>
<keyword id="KW-0968">Cytoplasmic vesicle</keyword>
<keyword id="KW-0379">Hydroxylation</keyword>
<keyword id="KW-0472">Membrane</keyword>
<keyword id="KW-0539">Nucleus</keyword>
<keyword id="KW-0597">Phosphoprotein</keyword>
<keyword id="KW-0653">Protein transport</keyword>
<keyword id="KW-1185">Reference proteome</keyword>
<keyword id="KW-0734">Signal transduction inhibitor</keyword>
<keyword id="KW-0813">Transport</keyword>
<keyword id="KW-0832">Ubl conjugation</keyword>
<accession>P29067</accession>
<dbReference type="EMBL" id="M91590">
    <property type="protein sequence ID" value="AAA74460.1"/>
    <property type="molecule type" value="mRNA"/>
</dbReference>
<dbReference type="EMBL" id="BC087578">
    <property type="protein sequence ID" value="AAH87578.1"/>
    <property type="molecule type" value="mRNA"/>
</dbReference>
<dbReference type="EMBL" id="U03627">
    <property type="protein sequence ID" value="AAA17551.1"/>
    <property type="molecule type" value="mRNA"/>
</dbReference>
<dbReference type="EMBL" id="AF051457">
    <property type="protein sequence ID" value="AAC28617.1"/>
    <property type="molecule type" value="Genomic_DNA"/>
</dbReference>
<dbReference type="PIR" id="A59279">
    <property type="entry name" value="A59279"/>
</dbReference>
<dbReference type="RefSeq" id="NP_037043.1">
    <property type="nucleotide sequence ID" value="NM_012911.3"/>
</dbReference>
<dbReference type="PDB" id="6K3F">
    <property type="method" value="X-ray"/>
    <property type="resolution" value="2.30 A"/>
    <property type="chains" value="A/B/C/D/E/F=1-356"/>
</dbReference>
<dbReference type="PDB" id="8J9K">
    <property type="method" value="EM"/>
    <property type="resolution" value="3.50 A"/>
    <property type="chains" value="C=6-398"/>
</dbReference>
<dbReference type="PDBsum" id="6K3F"/>
<dbReference type="PDBsum" id="8J9K"/>
<dbReference type="EMDB" id="EMD-36110"/>
<dbReference type="SMR" id="P29067"/>
<dbReference type="BioGRID" id="247426">
    <property type="interactions" value="12"/>
</dbReference>
<dbReference type="CORUM" id="P29067"/>
<dbReference type="DIP" id="DIP-40507N"/>
<dbReference type="FunCoup" id="P29067">
    <property type="interactions" value="3164"/>
</dbReference>
<dbReference type="IntAct" id="P29067">
    <property type="interactions" value="21"/>
</dbReference>
<dbReference type="MINT" id="P29067"/>
<dbReference type="STRING" id="10116.ENSRNOP00000026207"/>
<dbReference type="iPTMnet" id="P29067"/>
<dbReference type="PhosphoSitePlus" id="P29067"/>
<dbReference type="PaxDb" id="10116-ENSRNOP00000026207"/>
<dbReference type="GeneID" id="25388"/>
<dbReference type="KEGG" id="rno:25388"/>
<dbReference type="UCSC" id="RGD:2157">
    <property type="organism name" value="rat"/>
</dbReference>
<dbReference type="AGR" id="RGD:2157"/>
<dbReference type="CTD" id="409"/>
<dbReference type="RGD" id="2157">
    <property type="gene designation" value="Arrb2"/>
</dbReference>
<dbReference type="VEuPathDB" id="HostDB:ENSRNOG00000019308"/>
<dbReference type="eggNOG" id="KOG3865">
    <property type="taxonomic scope" value="Eukaryota"/>
</dbReference>
<dbReference type="HOGENOM" id="CLU_033484_1_1_1"/>
<dbReference type="InParanoid" id="P29067"/>
<dbReference type="OrthoDB" id="24043at9989"/>
<dbReference type="PhylomeDB" id="P29067"/>
<dbReference type="Reactome" id="R-RNO-418555">
    <property type="pathway name" value="G alpha (s) signalling events"/>
</dbReference>
<dbReference type="Reactome" id="R-RNO-456926">
    <property type="pathway name" value="Thrombin signalling through proteinase activated receptors (PARs)"/>
</dbReference>
<dbReference type="Reactome" id="R-RNO-5099900">
    <property type="pathway name" value="WNT5A-dependent internalization of FZD4"/>
</dbReference>
<dbReference type="Reactome" id="R-RNO-5674135">
    <property type="pathway name" value="MAP2K and MAPK activation"/>
</dbReference>
<dbReference type="Reactome" id="R-RNO-5689880">
    <property type="pathway name" value="Ub-specific processing proteases"/>
</dbReference>
<dbReference type="Reactome" id="R-RNO-8856825">
    <property type="pathway name" value="Cargo recognition for clathrin-mediated endocytosis"/>
</dbReference>
<dbReference type="Reactome" id="R-RNO-8856828">
    <property type="pathway name" value="Clathrin-mediated endocytosis"/>
</dbReference>
<dbReference type="Reactome" id="R-RNO-9839389">
    <property type="pathway name" value="TGFBR3 regulates TGF-beta signaling"/>
</dbReference>
<dbReference type="PRO" id="PR:P29067"/>
<dbReference type="Proteomes" id="UP000002494">
    <property type="component" value="Chromosome 10"/>
</dbReference>
<dbReference type="Bgee" id="ENSRNOG00000019308">
    <property type="expression patterns" value="Expressed in thymus and 19 other cell types or tissues"/>
</dbReference>
<dbReference type="GO" id="GO:0016323">
    <property type="term" value="C:basolateral plasma membrane"/>
    <property type="evidence" value="ECO:0000314"/>
    <property type="project" value="RGD"/>
</dbReference>
<dbReference type="GO" id="GO:0005905">
    <property type="term" value="C:clathrin-coated pit"/>
    <property type="evidence" value="ECO:0007669"/>
    <property type="project" value="UniProtKB-SubCell"/>
</dbReference>
<dbReference type="GO" id="GO:0005737">
    <property type="term" value="C:cytoplasm"/>
    <property type="evidence" value="ECO:0000314"/>
    <property type="project" value="ARUK-UCL"/>
</dbReference>
<dbReference type="GO" id="GO:0031410">
    <property type="term" value="C:cytoplasmic vesicle"/>
    <property type="evidence" value="ECO:0000266"/>
    <property type="project" value="RGD"/>
</dbReference>
<dbReference type="GO" id="GO:0043197">
    <property type="term" value="C:dendritic spine"/>
    <property type="evidence" value="ECO:0000314"/>
    <property type="project" value="RGD"/>
</dbReference>
<dbReference type="GO" id="GO:0030139">
    <property type="term" value="C:endocytic vesicle"/>
    <property type="evidence" value="ECO:0000250"/>
    <property type="project" value="UniProtKB"/>
</dbReference>
<dbReference type="GO" id="GO:0005768">
    <property type="term" value="C:endosome"/>
    <property type="evidence" value="ECO:0000314"/>
    <property type="project" value="ARUK-UCL"/>
</dbReference>
<dbReference type="GO" id="GO:0098978">
    <property type="term" value="C:glutamatergic synapse"/>
    <property type="evidence" value="ECO:0000314"/>
    <property type="project" value="SynGO"/>
</dbReference>
<dbReference type="GO" id="GO:0005634">
    <property type="term" value="C:nucleus"/>
    <property type="evidence" value="ECO:0000266"/>
    <property type="project" value="RGD"/>
</dbReference>
<dbReference type="GO" id="GO:0005886">
    <property type="term" value="C:plasma membrane"/>
    <property type="evidence" value="ECO:0000266"/>
    <property type="project" value="RGD"/>
</dbReference>
<dbReference type="GO" id="GO:0014069">
    <property type="term" value="C:postsynaptic density"/>
    <property type="evidence" value="ECO:0000314"/>
    <property type="project" value="SynGO"/>
</dbReference>
<dbReference type="GO" id="GO:0045211">
    <property type="term" value="C:postsynaptic membrane"/>
    <property type="evidence" value="ECO:0000314"/>
    <property type="project" value="RGD"/>
</dbReference>
<dbReference type="GO" id="GO:0071889">
    <property type="term" value="F:14-3-3 protein binding"/>
    <property type="evidence" value="ECO:0000314"/>
    <property type="project" value="RGD"/>
</dbReference>
<dbReference type="GO" id="GO:0031691">
    <property type="term" value="F:alpha-1A adrenergic receptor binding"/>
    <property type="evidence" value="ECO:0000353"/>
    <property type="project" value="RGD"/>
</dbReference>
<dbReference type="GO" id="GO:0031692">
    <property type="term" value="F:alpha-1B adrenergic receptor binding"/>
    <property type="evidence" value="ECO:0000314"/>
    <property type="project" value="RGD"/>
</dbReference>
<dbReference type="GO" id="GO:0031701">
    <property type="term" value="F:angiotensin receptor binding"/>
    <property type="evidence" value="ECO:0000266"/>
    <property type="project" value="RGD"/>
</dbReference>
<dbReference type="GO" id="GO:1990763">
    <property type="term" value="F:arrestin family protein binding"/>
    <property type="evidence" value="ECO:0000353"/>
    <property type="project" value="UniProtKB"/>
</dbReference>
<dbReference type="GO" id="GO:0031748">
    <property type="term" value="F:D1 dopamine receptor binding"/>
    <property type="evidence" value="ECO:0000353"/>
    <property type="project" value="RGD"/>
</dbReference>
<dbReference type="GO" id="GO:0019899">
    <property type="term" value="F:enzyme binding"/>
    <property type="evidence" value="ECO:0000266"/>
    <property type="project" value="RGD"/>
</dbReference>
<dbReference type="GO" id="GO:0031762">
    <property type="term" value="F:follicle-stimulating hormone receptor binding"/>
    <property type="evidence" value="ECO:0000353"/>
    <property type="project" value="RGD"/>
</dbReference>
<dbReference type="GO" id="GO:0001664">
    <property type="term" value="F:G protein-coupled receptor binding"/>
    <property type="evidence" value="ECO:0000266"/>
    <property type="project" value="RGD"/>
</dbReference>
<dbReference type="GO" id="GO:0042802">
    <property type="term" value="F:identical protein binding"/>
    <property type="evidence" value="ECO:0000353"/>
    <property type="project" value="IntAct"/>
</dbReference>
<dbReference type="GO" id="GO:0051019">
    <property type="term" value="F:mitogen-activated protein kinase binding"/>
    <property type="evidence" value="ECO:0000353"/>
    <property type="project" value="RGD"/>
</dbReference>
<dbReference type="GO" id="GO:0060090">
    <property type="term" value="F:molecular adaptor activity"/>
    <property type="evidence" value="ECO:0000266"/>
    <property type="project" value="RGD"/>
</dbReference>
<dbReference type="GO" id="GO:0031859">
    <property type="term" value="F:platelet activating factor receptor binding"/>
    <property type="evidence" value="ECO:0000353"/>
    <property type="project" value="RGD"/>
</dbReference>
<dbReference type="GO" id="GO:0019904">
    <property type="term" value="F:protein domain specific binding"/>
    <property type="evidence" value="ECO:0000353"/>
    <property type="project" value="RGD"/>
</dbReference>
<dbReference type="GO" id="GO:0043422">
    <property type="term" value="F:protein kinase B binding"/>
    <property type="evidence" value="ECO:0000266"/>
    <property type="project" value="RGD"/>
</dbReference>
<dbReference type="GO" id="GO:0044877">
    <property type="term" value="F:protein-containing complex binding"/>
    <property type="evidence" value="ECO:0000314"/>
    <property type="project" value="RGD"/>
</dbReference>
<dbReference type="GO" id="GO:0005102">
    <property type="term" value="F:signaling receptor binding"/>
    <property type="evidence" value="ECO:0000266"/>
    <property type="project" value="RGD"/>
</dbReference>
<dbReference type="GO" id="GO:0031702">
    <property type="term" value="F:type 1 angiotensin receptor binding"/>
    <property type="evidence" value="ECO:0000353"/>
    <property type="project" value="RGD"/>
</dbReference>
<dbReference type="GO" id="GO:0031826">
    <property type="term" value="F:type 2A serotonin receptor binding"/>
    <property type="evidence" value="ECO:0000353"/>
    <property type="project" value="RGD"/>
</dbReference>
<dbReference type="GO" id="GO:0031625">
    <property type="term" value="F:ubiquitin protein ligase binding"/>
    <property type="evidence" value="ECO:0000266"/>
    <property type="project" value="RGD"/>
</dbReference>
<dbReference type="GO" id="GO:0007628">
    <property type="term" value="P:adult walking behavior"/>
    <property type="evidence" value="ECO:0000266"/>
    <property type="project" value="RGD"/>
</dbReference>
<dbReference type="GO" id="GO:0060326">
    <property type="term" value="P:cell chemotaxis"/>
    <property type="evidence" value="ECO:0000266"/>
    <property type="project" value="RGD"/>
</dbReference>
<dbReference type="GO" id="GO:0007623">
    <property type="term" value="P:circadian rhythm"/>
    <property type="evidence" value="ECO:0000270"/>
    <property type="project" value="RGD"/>
</dbReference>
<dbReference type="GO" id="GO:0002029">
    <property type="term" value="P:desensitization of G protein-coupled receptor signaling pathway"/>
    <property type="evidence" value="ECO:0000266"/>
    <property type="project" value="RGD"/>
</dbReference>
<dbReference type="GO" id="GO:0050965">
    <property type="term" value="P:detection of temperature stimulus involved in sensory perception of pain"/>
    <property type="evidence" value="ECO:0000315"/>
    <property type="project" value="RGD"/>
</dbReference>
<dbReference type="GO" id="GO:0006897">
    <property type="term" value="P:endocytosis"/>
    <property type="evidence" value="ECO:0000314"/>
    <property type="project" value="RGD"/>
</dbReference>
<dbReference type="GO" id="GO:0042699">
    <property type="term" value="P:follicle-stimulating hormone signaling pathway"/>
    <property type="evidence" value="ECO:0000314"/>
    <property type="project" value="RGD"/>
</dbReference>
<dbReference type="GO" id="GO:0002031">
    <property type="term" value="P:G protein-coupled receptor internalization"/>
    <property type="evidence" value="ECO:0000266"/>
    <property type="project" value="RGD"/>
</dbReference>
<dbReference type="GO" id="GO:0007186">
    <property type="term" value="P:G protein-coupled receptor signaling pathway"/>
    <property type="evidence" value="ECO:0000314"/>
    <property type="project" value="RGD"/>
</dbReference>
<dbReference type="GO" id="GO:0050804">
    <property type="term" value="P:modulation of chemical synaptic transmission"/>
    <property type="evidence" value="ECO:0000266"/>
    <property type="project" value="RGD"/>
</dbReference>
<dbReference type="GO" id="GO:0043124">
    <property type="term" value="P:negative regulation of canonical NF-kappaB signal transduction"/>
    <property type="evidence" value="ECO:0000266"/>
    <property type="project" value="RGD"/>
</dbReference>
<dbReference type="GO" id="GO:0032691">
    <property type="term" value="P:negative regulation of interleukin-1 beta production"/>
    <property type="evidence" value="ECO:0000266"/>
    <property type="project" value="RGD"/>
</dbReference>
<dbReference type="GO" id="GO:0032695">
    <property type="term" value="P:negative regulation of interleukin-12 production"/>
    <property type="evidence" value="ECO:0000266"/>
    <property type="project" value="RGD"/>
</dbReference>
<dbReference type="GO" id="GO:0032715">
    <property type="term" value="P:negative regulation of interleukin-6 production"/>
    <property type="evidence" value="ECO:0000266"/>
    <property type="project" value="RGD"/>
</dbReference>
<dbReference type="GO" id="GO:0045953">
    <property type="term" value="P:negative regulation of natural killer cell mediated cytotoxicity"/>
    <property type="evidence" value="ECO:0000266"/>
    <property type="project" value="RGD"/>
</dbReference>
<dbReference type="GO" id="GO:0043524">
    <property type="term" value="P:negative regulation of neuron apoptotic process"/>
    <property type="evidence" value="ECO:0000315"/>
    <property type="project" value="RGD"/>
</dbReference>
<dbReference type="GO" id="GO:2000475">
    <property type="term" value="P:negative regulation of opioid receptor signaling pathway"/>
    <property type="evidence" value="ECO:0000314"/>
    <property type="project" value="RGD"/>
</dbReference>
<dbReference type="GO" id="GO:0031397">
    <property type="term" value="P:negative regulation of protein ubiquitination"/>
    <property type="evidence" value="ECO:0000315"/>
    <property type="project" value="RGD"/>
</dbReference>
<dbReference type="GO" id="GO:0090201">
    <property type="term" value="P:negative regulation of release of cytochrome c from mitochondria"/>
    <property type="evidence" value="ECO:0000315"/>
    <property type="project" value="RGD"/>
</dbReference>
<dbReference type="GO" id="GO:0034392">
    <property type="term" value="P:negative regulation of smooth muscle cell apoptotic process"/>
    <property type="evidence" value="ECO:0000315"/>
    <property type="project" value="RGD"/>
</dbReference>
<dbReference type="GO" id="GO:0034122">
    <property type="term" value="P:negative regulation of toll-like receptor signaling pathway"/>
    <property type="evidence" value="ECO:0000266"/>
    <property type="project" value="RGD"/>
</dbReference>
<dbReference type="GO" id="GO:0032720">
    <property type="term" value="P:negative regulation of tumor necrosis factor production"/>
    <property type="evidence" value="ECO:0000266"/>
    <property type="project" value="RGD"/>
</dbReference>
<dbReference type="GO" id="GO:0051928">
    <property type="term" value="P:positive regulation of calcium ion transport"/>
    <property type="evidence" value="ECO:0000315"/>
    <property type="project" value="RGD"/>
</dbReference>
<dbReference type="GO" id="GO:2000727">
    <property type="term" value="P:positive regulation of cardiac muscle cell differentiation"/>
    <property type="evidence" value="ECO:0000266"/>
    <property type="project" value="RGD"/>
</dbReference>
<dbReference type="GO" id="GO:0032967">
    <property type="term" value="P:positive regulation of collagen biosynthetic process"/>
    <property type="evidence" value="ECO:0000315"/>
    <property type="project" value="RGD"/>
</dbReference>
<dbReference type="GO" id="GO:2000573">
    <property type="term" value="P:positive regulation of DNA biosynthetic process"/>
    <property type="evidence" value="ECO:0000315"/>
    <property type="project" value="RGD"/>
</dbReference>
<dbReference type="GO" id="GO:1904037">
    <property type="term" value="P:positive regulation of epithelial cell apoptotic process"/>
    <property type="evidence" value="ECO:0000315"/>
    <property type="project" value="RGD"/>
</dbReference>
<dbReference type="GO" id="GO:0070374">
    <property type="term" value="P:positive regulation of ERK1 and ERK2 cascade"/>
    <property type="evidence" value="ECO:0000315"/>
    <property type="project" value="RGD"/>
</dbReference>
<dbReference type="GO" id="GO:0010628">
    <property type="term" value="P:positive regulation of gene expression"/>
    <property type="evidence" value="ECO:0000266"/>
    <property type="project" value="RGD"/>
</dbReference>
<dbReference type="GO" id="GO:0060252">
    <property type="term" value="P:positive regulation of glial cell proliferation"/>
    <property type="evidence" value="ECO:0000315"/>
    <property type="project" value="RGD"/>
</dbReference>
<dbReference type="GO" id="GO:2000476">
    <property type="term" value="P:positive regulation of opioid receptor signaling pathway"/>
    <property type="evidence" value="ECO:0000315"/>
    <property type="project" value="RGD"/>
</dbReference>
<dbReference type="GO" id="GO:0051897">
    <property type="term" value="P:positive regulation of phosphatidylinositol 3-kinase/protein kinase B signal transduction"/>
    <property type="evidence" value="ECO:0000315"/>
    <property type="project" value="RGD"/>
</dbReference>
<dbReference type="GO" id="GO:0002092">
    <property type="term" value="P:positive regulation of receptor internalization"/>
    <property type="evidence" value="ECO:0000315"/>
    <property type="project" value="RGD"/>
</dbReference>
<dbReference type="GO" id="GO:0032226">
    <property type="term" value="P:positive regulation of synaptic transmission, dopaminergic"/>
    <property type="evidence" value="ECO:0000266"/>
    <property type="project" value="RGD"/>
</dbReference>
<dbReference type="GO" id="GO:0098926">
    <property type="term" value="P:postsynaptic signal transduction"/>
    <property type="evidence" value="ECO:0000266"/>
    <property type="project" value="RGD"/>
</dbReference>
<dbReference type="GO" id="GO:0043161">
    <property type="term" value="P:proteasome-mediated ubiquitin-dependent protein catabolic process"/>
    <property type="evidence" value="ECO:0000266"/>
    <property type="project" value="RGD"/>
</dbReference>
<dbReference type="GO" id="GO:0015031">
    <property type="term" value="P:protein transport"/>
    <property type="evidence" value="ECO:0007669"/>
    <property type="project" value="UniProtKB-KW"/>
</dbReference>
<dbReference type="GO" id="GO:0016567">
    <property type="term" value="P:protein ubiquitination"/>
    <property type="evidence" value="ECO:0000266"/>
    <property type="project" value="RGD"/>
</dbReference>
<dbReference type="GO" id="GO:0031623">
    <property type="term" value="P:receptor internalization"/>
    <property type="evidence" value="ECO:0000266"/>
    <property type="project" value="RGD"/>
</dbReference>
<dbReference type="GO" id="GO:0008277">
    <property type="term" value="P:regulation of G protein-coupled receptor signaling pathway"/>
    <property type="evidence" value="ECO:0000314"/>
    <property type="project" value="RGD"/>
</dbReference>
<dbReference type="GO" id="GO:0043278">
    <property type="term" value="P:response to morphine"/>
    <property type="evidence" value="ECO:0000270"/>
    <property type="project" value="RGD"/>
</dbReference>
<dbReference type="GO" id="GO:0006366">
    <property type="term" value="P:transcription by RNA polymerase II"/>
    <property type="evidence" value="ECO:0000266"/>
    <property type="project" value="RGD"/>
</dbReference>
<dbReference type="GO" id="GO:0007179">
    <property type="term" value="P:transforming growth factor beta receptor signaling pathway"/>
    <property type="evidence" value="ECO:0000266"/>
    <property type="project" value="RGD"/>
</dbReference>
<dbReference type="FunFam" id="2.60.40.640:FF:000003">
    <property type="entry name" value="beta-arrestin-1 isoform X1"/>
    <property type="match status" value="1"/>
</dbReference>
<dbReference type="FunFam" id="2.60.40.840:FF:000001">
    <property type="entry name" value="beta-arrestin-1 isoform X1"/>
    <property type="match status" value="1"/>
</dbReference>
<dbReference type="Gene3D" id="2.60.40.640">
    <property type="match status" value="1"/>
</dbReference>
<dbReference type="Gene3D" id="2.60.40.840">
    <property type="match status" value="1"/>
</dbReference>
<dbReference type="InterPro" id="IPR000698">
    <property type="entry name" value="Arrestin"/>
</dbReference>
<dbReference type="InterPro" id="IPR014752">
    <property type="entry name" value="Arrestin-like_C"/>
</dbReference>
<dbReference type="InterPro" id="IPR011021">
    <property type="entry name" value="Arrestin-like_N"/>
</dbReference>
<dbReference type="InterPro" id="IPR011022">
    <property type="entry name" value="Arrestin_C-like"/>
</dbReference>
<dbReference type="InterPro" id="IPR017864">
    <property type="entry name" value="Arrestin_CS"/>
</dbReference>
<dbReference type="InterPro" id="IPR014753">
    <property type="entry name" value="Arrestin_N"/>
</dbReference>
<dbReference type="InterPro" id="IPR014756">
    <property type="entry name" value="Ig_E-set"/>
</dbReference>
<dbReference type="PANTHER" id="PTHR11792">
    <property type="entry name" value="ARRESTIN"/>
    <property type="match status" value="1"/>
</dbReference>
<dbReference type="PANTHER" id="PTHR11792:SF20">
    <property type="entry name" value="BETA-ARRESTIN-2"/>
    <property type="match status" value="1"/>
</dbReference>
<dbReference type="Pfam" id="PF02752">
    <property type="entry name" value="Arrestin_C"/>
    <property type="match status" value="1"/>
</dbReference>
<dbReference type="Pfam" id="PF00339">
    <property type="entry name" value="Arrestin_N"/>
    <property type="match status" value="1"/>
</dbReference>
<dbReference type="PRINTS" id="PR00309">
    <property type="entry name" value="ARRESTIN"/>
</dbReference>
<dbReference type="SMART" id="SM01017">
    <property type="entry name" value="Arrestin_C"/>
    <property type="match status" value="1"/>
</dbReference>
<dbReference type="SUPFAM" id="SSF81296">
    <property type="entry name" value="E set domains"/>
    <property type="match status" value="2"/>
</dbReference>
<dbReference type="PROSITE" id="PS00295">
    <property type="entry name" value="ARRESTINS"/>
    <property type="match status" value="1"/>
</dbReference>
<sequence>MGEKPGTRVFKKSSPNCKLTVYLGKRDFVDHLDKVDPVDGVVLVDPDYLKDRKVFVTLTCAFRYGREDLDVLGLSFRKDLFIATYQAFPPMPNPPRPPTRLQDRLLKKLGQHAHPFFFTIPQNLPCSVTLQPGPEDTGKACGVDFEIRAFCAKSIEEKSHKRNSVRLIIRKVQFAPETPGPQPSAETTRHFLMSDRRSLHLEASLDKELYYHGEPLNVNVHVTNNSAKTVKKIRVSVRQYADICLFSTAQYKCPVAQLEQDDQVSPSSTFCKVYTITPLLSDNREKRGLALDGQLKHEDTNLASSTIVKEGANKEVLGILVSYRVKVKLVVSRGGDVSVELPFVLMHPKPHDHITLPRPQSAPREIDIPVDTNLIEFDTNYATDDDIVFEDFARLRLKGMKDDDCDDQFC</sequence>
<evidence type="ECO:0000250" key="1"/>
<evidence type="ECO:0000250" key="2">
    <source>
        <dbReference type="UniProtKB" id="P32121"/>
    </source>
</evidence>
<evidence type="ECO:0000250" key="3">
    <source>
        <dbReference type="UniProtKB" id="Q91YI4"/>
    </source>
</evidence>
<evidence type="ECO:0000269" key="4">
    <source>
    </source>
</evidence>
<evidence type="ECO:0000269" key="5">
    <source>
    </source>
</evidence>
<evidence type="ECO:0000269" key="6">
    <source>
    </source>
</evidence>
<evidence type="ECO:0000269" key="7">
    <source>
    </source>
</evidence>
<evidence type="ECO:0000269" key="8">
    <source>
    </source>
</evidence>
<evidence type="ECO:0000269" key="9">
    <source>
    </source>
</evidence>
<evidence type="ECO:0000269" key="10">
    <source>
    </source>
</evidence>
<evidence type="ECO:0000269" key="11">
    <source>
    </source>
</evidence>
<evidence type="ECO:0000269" key="12">
    <source>
    </source>
</evidence>
<evidence type="ECO:0000269" key="13">
    <source>
    </source>
</evidence>
<evidence type="ECO:0000269" key="14">
    <source>
    </source>
</evidence>
<evidence type="ECO:0000269" key="15">
    <source>
    </source>
</evidence>
<evidence type="ECO:0000269" key="16">
    <source>
    </source>
</evidence>
<evidence type="ECO:0000269" key="17">
    <source>
    </source>
</evidence>
<evidence type="ECO:0000269" key="18">
    <source>
    </source>
</evidence>
<evidence type="ECO:0000305" key="19"/>
<evidence type="ECO:0000305" key="20">
    <source>
    </source>
</evidence>
<evidence type="ECO:0007829" key="21">
    <source>
        <dbReference type="PDB" id="6K3F"/>
    </source>
</evidence>
<evidence type="ECO:0007829" key="22">
    <source>
        <dbReference type="PDB" id="8J9K"/>
    </source>
</evidence>